<keyword id="KW-0010">Activator</keyword>
<keyword id="KW-0157">Chromophore</keyword>
<keyword id="KW-0238">DNA-binding</keyword>
<keyword id="KW-0285">Flavoprotein</keyword>
<keyword id="KW-0288">FMN</keyword>
<keyword id="KW-0479">Metal-binding</keyword>
<keyword id="KW-0539">Nucleus</keyword>
<keyword id="KW-0600">Photoreceptor protein</keyword>
<keyword id="KW-0675">Receptor</keyword>
<keyword id="KW-1185">Reference proteome</keyword>
<keyword id="KW-0677">Repeat</keyword>
<keyword id="KW-0716">Sensory transduction</keyword>
<keyword id="KW-0804">Transcription</keyword>
<keyword id="KW-0805">Transcription regulation</keyword>
<keyword id="KW-0862">Zinc</keyword>
<keyword id="KW-0863">Zinc-finger</keyword>
<accession>Q01371</accession>
<accession>Q7RVA7</accession>
<accession>V5IKL6</accession>
<reference key="1">
    <citation type="journal article" date="1996" name="EMBO J.">
        <title>White collar-1, a central regulator of blue light responses in Neurospora, is a zinc finger protein.</title>
        <authorList>
            <person name="Ballario P."/>
            <person name="Vittorioso P."/>
            <person name="Magrelli A."/>
            <person name="Talora C."/>
            <person name="Cabibbo A."/>
            <person name="Macino G."/>
        </authorList>
    </citation>
    <scope>NUCLEOTIDE SEQUENCE [GENOMIC DNA]</scope>
    <source>
        <strain>ATCC 24698 / 74-OR23-1A / CBS 708.71 / DSM 1257 / FGSC 987</strain>
    </source>
</reference>
<reference key="2">
    <citation type="submission" date="1999-07" db="EMBL/GenBank/DDBJ databases">
        <authorList>
            <person name="Ballario P."/>
        </authorList>
    </citation>
    <scope>SEQUENCE REVISION TO C-TERMINUS</scope>
</reference>
<reference key="3">
    <citation type="journal article" date="2003" name="Nature">
        <title>The genome sequence of the filamentous fungus Neurospora crassa.</title>
        <authorList>
            <person name="Galagan J.E."/>
            <person name="Calvo S.E."/>
            <person name="Borkovich K.A."/>
            <person name="Selker E.U."/>
            <person name="Read N.D."/>
            <person name="Jaffe D.B."/>
            <person name="FitzHugh W."/>
            <person name="Ma L.-J."/>
            <person name="Smirnov S."/>
            <person name="Purcell S."/>
            <person name="Rehman B."/>
            <person name="Elkins T."/>
            <person name="Engels R."/>
            <person name="Wang S."/>
            <person name="Nielsen C.B."/>
            <person name="Butler J."/>
            <person name="Endrizzi M."/>
            <person name="Qui D."/>
            <person name="Ianakiev P."/>
            <person name="Bell-Pedersen D."/>
            <person name="Nelson M.A."/>
            <person name="Werner-Washburne M."/>
            <person name="Selitrennikoff C.P."/>
            <person name="Kinsey J.A."/>
            <person name="Braun E.L."/>
            <person name="Zelter A."/>
            <person name="Schulte U."/>
            <person name="Kothe G.O."/>
            <person name="Jedd G."/>
            <person name="Mewes H.-W."/>
            <person name="Staben C."/>
            <person name="Marcotte E."/>
            <person name="Greenberg D."/>
            <person name="Roy A."/>
            <person name="Foley K."/>
            <person name="Naylor J."/>
            <person name="Stange-Thomann N."/>
            <person name="Barrett R."/>
            <person name="Gnerre S."/>
            <person name="Kamal M."/>
            <person name="Kamvysselis M."/>
            <person name="Mauceli E.W."/>
            <person name="Bielke C."/>
            <person name="Rudd S."/>
            <person name="Frishman D."/>
            <person name="Krystofova S."/>
            <person name="Rasmussen C."/>
            <person name="Metzenberg R.L."/>
            <person name="Perkins D.D."/>
            <person name="Kroken S."/>
            <person name="Cogoni C."/>
            <person name="Macino G."/>
            <person name="Catcheside D.E.A."/>
            <person name="Li W."/>
            <person name="Pratt R.J."/>
            <person name="Osmani S.A."/>
            <person name="DeSouza C.P.C."/>
            <person name="Glass N.L."/>
            <person name="Orbach M.J."/>
            <person name="Berglund J.A."/>
            <person name="Voelker R."/>
            <person name="Yarden O."/>
            <person name="Plamann M."/>
            <person name="Seiler S."/>
            <person name="Dunlap J.C."/>
            <person name="Radford A."/>
            <person name="Aramayo R."/>
            <person name="Natvig D.O."/>
            <person name="Alex L.A."/>
            <person name="Mannhaupt G."/>
            <person name="Ebbole D.J."/>
            <person name="Freitag M."/>
            <person name="Paulsen I."/>
            <person name="Sachs M.S."/>
            <person name="Lander E.S."/>
            <person name="Nusbaum C."/>
            <person name="Birren B.W."/>
        </authorList>
    </citation>
    <scope>NUCLEOTIDE SEQUENCE [LARGE SCALE GENOMIC DNA]</scope>
    <source>
        <strain>ATCC 24698 / 74-OR23-1A / CBS 708.71 / DSM 1257 / FGSC 987</strain>
    </source>
</reference>
<protein>
    <recommendedName>
        <fullName>White collar 1 protein</fullName>
        <shortName>WC1</shortName>
    </recommendedName>
</protein>
<proteinExistence type="evidence at protein level"/>
<organism>
    <name type="scientific">Neurospora crassa (strain ATCC 24698 / 74-OR23-1A / CBS 708.71 / DSM 1257 / FGSC 987)</name>
    <dbReference type="NCBI Taxonomy" id="367110"/>
    <lineage>
        <taxon>Eukaryota</taxon>
        <taxon>Fungi</taxon>
        <taxon>Dikarya</taxon>
        <taxon>Ascomycota</taxon>
        <taxon>Pezizomycotina</taxon>
        <taxon>Sordariomycetes</taxon>
        <taxon>Sordariomycetidae</taxon>
        <taxon>Sordariales</taxon>
        <taxon>Sordariaceae</taxon>
        <taxon>Neurospora</taxon>
    </lineage>
</organism>
<feature type="chain" id="PRO_0000083489" description="White collar 1 protein">
    <location>
        <begin position="1"/>
        <end position="1167"/>
    </location>
</feature>
<feature type="domain" description="PAS 1" evidence="3">
    <location>
        <begin position="381"/>
        <end position="452"/>
    </location>
</feature>
<feature type="domain" description="PAC 1">
    <location>
        <begin position="469"/>
        <end position="508"/>
    </location>
</feature>
<feature type="domain" description="PAS 2" evidence="3">
    <location>
        <begin position="574"/>
        <end position="644"/>
    </location>
</feature>
<feature type="domain" description="PAC 2">
    <location>
        <begin position="650"/>
        <end position="691"/>
    </location>
</feature>
<feature type="domain" description="PAS 3" evidence="3">
    <location>
        <begin position="693"/>
        <end position="763"/>
    </location>
</feature>
<feature type="zinc finger region" description="GATA-type" evidence="2">
    <location>
        <begin position="934"/>
        <end position="959"/>
    </location>
</feature>
<feature type="region of interest" description="Disordered" evidence="4">
    <location>
        <begin position="1"/>
        <end position="91"/>
    </location>
</feature>
<feature type="region of interest" description="Disordered" evidence="4">
    <location>
        <begin position="307"/>
        <end position="355"/>
    </location>
</feature>
<feature type="region of interest" description="Disordered" evidence="4">
    <location>
        <begin position="849"/>
        <end position="872"/>
    </location>
</feature>
<feature type="region of interest" description="Disordered" evidence="4">
    <location>
        <begin position="918"/>
        <end position="952"/>
    </location>
</feature>
<feature type="region of interest" description="Disordered" evidence="4">
    <location>
        <begin position="966"/>
        <end position="1047"/>
    </location>
</feature>
<feature type="region of interest" description="Disordered" evidence="4">
    <location>
        <begin position="1060"/>
        <end position="1167"/>
    </location>
</feature>
<feature type="compositionally biased region" description="Low complexity" evidence="4">
    <location>
        <begin position="21"/>
        <end position="57"/>
    </location>
</feature>
<feature type="compositionally biased region" description="Polar residues" evidence="4">
    <location>
        <begin position="70"/>
        <end position="91"/>
    </location>
</feature>
<feature type="compositionally biased region" description="Polar residues" evidence="4">
    <location>
        <begin position="307"/>
        <end position="325"/>
    </location>
</feature>
<feature type="compositionally biased region" description="Low complexity" evidence="4">
    <location>
        <begin position="335"/>
        <end position="348"/>
    </location>
</feature>
<feature type="compositionally biased region" description="Low complexity" evidence="4">
    <location>
        <begin position="849"/>
        <end position="861"/>
    </location>
</feature>
<feature type="compositionally biased region" description="Polar residues" evidence="4">
    <location>
        <begin position="968"/>
        <end position="977"/>
    </location>
</feature>
<feature type="compositionally biased region" description="Low complexity" evidence="4">
    <location>
        <begin position="986"/>
        <end position="995"/>
    </location>
</feature>
<feature type="compositionally biased region" description="Polar residues" evidence="4">
    <location>
        <begin position="1004"/>
        <end position="1033"/>
    </location>
</feature>
<feature type="compositionally biased region" description="Low complexity" evidence="4">
    <location>
        <begin position="1036"/>
        <end position="1047"/>
    </location>
</feature>
<feature type="compositionally biased region" description="Low complexity" evidence="4">
    <location>
        <begin position="1104"/>
        <end position="1128"/>
    </location>
</feature>
<feature type="modified residue" description="S-4a-FMN cysteine" evidence="1">
    <location>
        <position position="428"/>
    </location>
</feature>
<name>WC1_NEUCR</name>
<evidence type="ECO:0000250" key="1"/>
<evidence type="ECO:0000255" key="2">
    <source>
        <dbReference type="PROSITE-ProRule" id="PRU00094"/>
    </source>
</evidence>
<evidence type="ECO:0000255" key="3">
    <source>
        <dbReference type="PROSITE-ProRule" id="PRU00140"/>
    </source>
</evidence>
<evidence type="ECO:0000256" key="4">
    <source>
        <dbReference type="SAM" id="MobiDB-lite"/>
    </source>
</evidence>
<evidence type="ECO:0000305" key="5"/>
<comment type="function">
    <text>May function as a transcription factor involved in light regulation. Binds and affects blue light regulation of the al-3 gene. Wc-1 and wc-2 proteins interact via homologous PAS domains, bind to promoters of light regulated genes such as frq, and activate transcription.</text>
</comment>
<comment type="subunit">
    <text evidence="5">Heterodimer of wc-1 and wc-2.</text>
</comment>
<comment type="interaction">
    <interactant intactId="EBI-2922603">
        <id>Q01371</id>
    </interactant>
    <interactant intactId="EBI-2924174">
        <id>P78714</id>
        <label>wc-2</label>
    </interactant>
    <organismsDiffer>false</organismsDiffer>
    <experiments>5</experiments>
</comment>
<comment type="interaction">
    <interactant intactId="EBI-2922603">
        <id>Q01371</id>
    </interactant>
    <interactant intactId="EBI-2922644">
        <id>Q9C3Y6</id>
        <label>vvd</label>
    </interactant>
    <organismsDiffer>true</organismsDiffer>
    <experiments>5</experiments>
</comment>
<comment type="subcellular location">
    <subcellularLocation>
        <location>Nucleus</location>
    </subcellularLocation>
</comment>
<comment type="induction">
    <text>By blue light.</text>
</comment>
<comment type="domain">
    <text>The glutamine-rich domain might function in activating gene expression.</text>
</comment>
<comment type="PTM">
    <text evidence="1">FMN binds covalently to cysteine after exposure to blue light and is reversed in the dark.</text>
</comment>
<gene>
    <name type="primary">wc-1</name>
    <name type="ORF">NCU02356</name>
</gene>
<dbReference type="EMBL" id="X94300">
    <property type="protein sequence ID" value="CAA63964.2"/>
    <property type="molecule type" value="Genomic_DNA"/>
</dbReference>
<dbReference type="EMBL" id="CM002242">
    <property type="protein sequence ID" value="ESA41977.1"/>
    <property type="molecule type" value="Genomic_DNA"/>
</dbReference>
<dbReference type="EMBL" id="CM002242">
    <property type="protein sequence ID" value="ESA41978.1"/>
    <property type="molecule type" value="Genomic_DNA"/>
</dbReference>
<dbReference type="EMBL" id="CM002242">
    <property type="protein sequence ID" value="ESA41979.1"/>
    <property type="molecule type" value="Genomic_DNA"/>
</dbReference>
<dbReference type="EMBL" id="CM002242">
    <property type="protein sequence ID" value="ESA41980.1"/>
    <property type="molecule type" value="Genomic_DNA"/>
</dbReference>
<dbReference type="RefSeq" id="XP_011395150.1">
    <property type="nucleotide sequence ID" value="XM_011396848.1"/>
</dbReference>
<dbReference type="RefSeq" id="XP_011395151.1">
    <property type="nucleotide sequence ID" value="XM_011396849.1"/>
</dbReference>
<dbReference type="RefSeq" id="XP_011395152.1">
    <property type="nucleotide sequence ID" value="XM_011396850.1"/>
</dbReference>
<dbReference type="RefSeq" id="XP_011395153.1">
    <property type="nucleotide sequence ID" value="XM_011396851.1"/>
</dbReference>
<dbReference type="SMR" id="Q01371"/>
<dbReference type="DIP" id="DIP-1155N"/>
<dbReference type="IntAct" id="Q01371">
    <property type="interactions" value="2"/>
</dbReference>
<dbReference type="MINT" id="Q01371"/>
<dbReference type="STRING" id="367110.Q01371"/>
<dbReference type="EnsemblFungi" id="ESA41977">
    <property type="protein sequence ID" value="ESA41977"/>
    <property type="gene ID" value="NCU02356"/>
</dbReference>
<dbReference type="EnsemblFungi" id="ESA41978">
    <property type="protein sequence ID" value="ESA41978"/>
    <property type="gene ID" value="NCU02356"/>
</dbReference>
<dbReference type="EnsemblFungi" id="ESA41979">
    <property type="protein sequence ID" value="ESA41979"/>
    <property type="gene ID" value="NCU02356"/>
</dbReference>
<dbReference type="EnsemblFungi" id="ESA41980">
    <property type="protein sequence ID" value="ESA41980"/>
    <property type="gene ID" value="NCU02356"/>
</dbReference>
<dbReference type="GeneID" id="3875924"/>
<dbReference type="KEGG" id="ncr:NCU02356"/>
<dbReference type="VEuPathDB" id="FungiDB:NCU02356"/>
<dbReference type="HOGENOM" id="CLU_007918_2_0_1"/>
<dbReference type="InParanoid" id="Q01371"/>
<dbReference type="OrthoDB" id="447251at2759"/>
<dbReference type="Proteomes" id="UP000001805">
    <property type="component" value="Chromosome 7, Linkage Group VII"/>
</dbReference>
<dbReference type="GO" id="GO:0005634">
    <property type="term" value="C:nucleus"/>
    <property type="evidence" value="ECO:0000318"/>
    <property type="project" value="GO_Central"/>
</dbReference>
<dbReference type="GO" id="GO:0009881">
    <property type="term" value="F:photoreceptor activity"/>
    <property type="evidence" value="ECO:0007669"/>
    <property type="project" value="UniProtKB-KW"/>
</dbReference>
<dbReference type="GO" id="GO:0043565">
    <property type="term" value="F:sequence-specific DNA binding"/>
    <property type="evidence" value="ECO:0007669"/>
    <property type="project" value="InterPro"/>
</dbReference>
<dbReference type="GO" id="GO:0008270">
    <property type="term" value="F:zinc ion binding"/>
    <property type="evidence" value="ECO:0007669"/>
    <property type="project" value="UniProtKB-KW"/>
</dbReference>
<dbReference type="GO" id="GO:0006355">
    <property type="term" value="P:regulation of DNA-templated transcription"/>
    <property type="evidence" value="ECO:0007669"/>
    <property type="project" value="InterPro"/>
</dbReference>
<dbReference type="CDD" id="cd00130">
    <property type="entry name" value="PAS"/>
    <property type="match status" value="3"/>
</dbReference>
<dbReference type="CDD" id="cd00202">
    <property type="entry name" value="ZnF_GATA"/>
    <property type="match status" value="1"/>
</dbReference>
<dbReference type="FunFam" id="3.30.450.20:FF:000064">
    <property type="entry name" value="Vivid PAS protein VVD"/>
    <property type="match status" value="1"/>
</dbReference>
<dbReference type="FunFam" id="3.30.450.20:FF:000063">
    <property type="entry name" value="White collar 1 protein"/>
    <property type="match status" value="1"/>
</dbReference>
<dbReference type="FunFam" id="3.30.50.10:FF:000077">
    <property type="entry name" value="White collar 1 protein"/>
    <property type="match status" value="1"/>
</dbReference>
<dbReference type="Gene3D" id="3.30.50.10">
    <property type="entry name" value="Erythroid Transcription Factor GATA-1, subunit A"/>
    <property type="match status" value="1"/>
</dbReference>
<dbReference type="Gene3D" id="3.30.450.20">
    <property type="entry name" value="PAS domain"/>
    <property type="match status" value="3"/>
</dbReference>
<dbReference type="InterPro" id="IPR001610">
    <property type="entry name" value="PAC"/>
</dbReference>
<dbReference type="InterPro" id="IPR000014">
    <property type="entry name" value="PAS"/>
</dbReference>
<dbReference type="InterPro" id="IPR035965">
    <property type="entry name" value="PAS-like_dom_sf"/>
</dbReference>
<dbReference type="InterPro" id="IPR013655">
    <property type="entry name" value="PAS_fold_3"/>
</dbReference>
<dbReference type="InterPro" id="IPR000679">
    <property type="entry name" value="Znf_GATA"/>
</dbReference>
<dbReference type="InterPro" id="IPR013088">
    <property type="entry name" value="Znf_NHR/GATA"/>
</dbReference>
<dbReference type="NCBIfam" id="TIGR00229">
    <property type="entry name" value="sensory_box"/>
    <property type="match status" value="2"/>
</dbReference>
<dbReference type="PANTHER" id="PTHR47429:SF7">
    <property type="entry name" value="GATA-FACTOR"/>
    <property type="match status" value="1"/>
</dbReference>
<dbReference type="PANTHER" id="PTHR47429">
    <property type="entry name" value="PROTEIN TWIN LOV 1"/>
    <property type="match status" value="1"/>
</dbReference>
<dbReference type="Pfam" id="PF00320">
    <property type="entry name" value="GATA"/>
    <property type="match status" value="1"/>
</dbReference>
<dbReference type="Pfam" id="PF08447">
    <property type="entry name" value="PAS_3"/>
    <property type="match status" value="1"/>
</dbReference>
<dbReference type="Pfam" id="PF13426">
    <property type="entry name" value="PAS_9"/>
    <property type="match status" value="2"/>
</dbReference>
<dbReference type="SMART" id="SM00086">
    <property type="entry name" value="PAC"/>
    <property type="match status" value="2"/>
</dbReference>
<dbReference type="SMART" id="SM00091">
    <property type="entry name" value="PAS"/>
    <property type="match status" value="3"/>
</dbReference>
<dbReference type="SMART" id="SM00401">
    <property type="entry name" value="ZnF_GATA"/>
    <property type="match status" value="1"/>
</dbReference>
<dbReference type="SUPFAM" id="SSF57716">
    <property type="entry name" value="Glucocorticoid receptor-like (DNA-binding domain)"/>
    <property type="match status" value="1"/>
</dbReference>
<dbReference type="SUPFAM" id="SSF55785">
    <property type="entry name" value="PYP-like sensor domain (PAS domain)"/>
    <property type="match status" value="3"/>
</dbReference>
<dbReference type="PROSITE" id="PS00344">
    <property type="entry name" value="GATA_ZN_FINGER_1"/>
    <property type="match status" value="1"/>
</dbReference>
<dbReference type="PROSITE" id="PS50114">
    <property type="entry name" value="GATA_ZN_FINGER_2"/>
    <property type="match status" value="1"/>
</dbReference>
<dbReference type="PROSITE" id="PS50112">
    <property type="entry name" value="PAS"/>
    <property type="match status" value="3"/>
</dbReference>
<sequence length="1167" mass="127454">MNNNYYGSPLSPEELQHQMHQHQQQQQQQQQQQQQQQQQQQQQQQQQQQQHQHQQQQKTNQHRNAGMMNTPPTTNQGNSTIHASDVTMSGGSDSLDEIIQQNLDEMHRRRSVPQPYGGQTRRLSMFDYANPNDGFSDYQLDNMSGNYGDMTGGMGMSGHSSPYAGQNIMAMSDHSGGYSHMSPNVMGNMMTYPNLNMYHSPPIENPYSSAGLDTIRTDFSMDMNMDSGSVSAASVHPTPGLNKQDDEMMTMEQGFGGGDDANASHQAQQNMGGLTPAMTPAMTPAMTPGVSNFAQGMATPVSQDAASTPATTFQSPSLSATTQTIRIGPPPPPSVTNAPTPAPFTSTPSGGGASQTKSIYSKSGFDMLRALWYVASRKDPKLKLGAVDMSCAFVVCDVTLNDCPIIYVSDNFQNLTGYSRHEIVGRNCRFLQAPDGNVEAGTKREFVENNAVYTLKKTIAEGQEIQQSLINYRKGGKPFLNLLTMIPIPWDTEEIRYFIGFQIDLVECPDAIIGQEGNGPMQVNYTHSDIGQYIWTPPTQKQLEPADGQTLGVDDVSTLLQQCNSKGVASDWHKQSWDKMLLENADDVVHVLSLKGLFLYLSPACKKVLEYDASDLVGTSLSSICHPSDIVPVTRELKEAQQHTPVNIVFRIRRKNSGYTWFESHGTLFNEQGKGRKCIILVGRKRPVFALHRKDLELNGGIGDSEIWTKVSTSGMFLFVSSNVRSLLDLLPENLQGTSMQDLMRKESRAEFGRTIEKARKGKIASCKHEVQNKRGQVLQAYTTFYPGDGGEGQRPTFLLAQTKLLKASSRTLAPATVTVKNMSPGGVPLSPMKGIQTDSDSNTLMGGMSKSGSSDSTGAMVSARSSAGPGQDAALDADNIFDELKTTRCTSWQYELRQMEKVNRMLAEELAQLLSNKKKRKRRKGGGNMVRDCANCHTRNTPEWRRGPSGNRDLCNSCGLRWAKQTGRVSPRTSSRGGNGDSMSKKSNSPSHSSPLHREVGNDSPSTTTATKNSPSLRGSSTTAPGTITTDSGPAVASSASGTGSTTIATSANSAASTVNALGPPATGPSGGSPAQHLPPHLQGTHLNAQAMQRVHQHKQHQQHQQQHQQQHQQQHQQQHQQLQQHQFNPPQSQPLLEGGSGFRGSGMEMTSIREEMGEHQQGLSV</sequence>